<feature type="chain" id="PRO_1000196009" description="Large ribosomal subunit protein bL34">
    <location>
        <begin position="1"/>
        <end position="51"/>
    </location>
</feature>
<evidence type="ECO:0000255" key="1">
    <source>
        <dbReference type="HAMAP-Rule" id="MF_00391"/>
    </source>
</evidence>
<evidence type="ECO:0000305" key="2"/>
<keyword id="KW-0687">Ribonucleoprotein</keyword>
<keyword id="KW-0689">Ribosomal protein</keyword>
<gene>
    <name evidence="1" type="primary">rpmH</name>
    <name type="ordered locus">BDU_438</name>
</gene>
<name>RL34_BORDL</name>
<reference key="1">
    <citation type="journal article" date="2008" name="PLoS Genet.">
        <title>The genome of Borrelia recurrentis, the agent of deadly louse-borne relapsing fever, is a degraded subset of tick-borne Borrelia duttonii.</title>
        <authorList>
            <person name="Lescot M."/>
            <person name="Audic S."/>
            <person name="Robert C."/>
            <person name="Nguyen T.T."/>
            <person name="Blanc G."/>
            <person name="Cutler S.J."/>
            <person name="Wincker P."/>
            <person name="Couloux A."/>
            <person name="Claverie J.-M."/>
            <person name="Raoult D."/>
            <person name="Drancourt M."/>
        </authorList>
    </citation>
    <scope>NUCLEOTIDE SEQUENCE [LARGE SCALE GENOMIC DNA]</scope>
    <source>
        <strain>Ly</strain>
    </source>
</reference>
<protein>
    <recommendedName>
        <fullName evidence="1">Large ribosomal subunit protein bL34</fullName>
    </recommendedName>
    <alternativeName>
        <fullName evidence="2">50S ribosomal protein L34</fullName>
    </alternativeName>
</protein>
<sequence>MKRTYQPSRVKRNRKFGFRARMKTKSGRLILARRRAKGRSKLTVSDEKKKY</sequence>
<accession>B5RLZ7</accession>
<comment type="similarity">
    <text evidence="1">Belongs to the bacterial ribosomal protein bL34 family.</text>
</comment>
<proteinExistence type="inferred from homology"/>
<dbReference type="EMBL" id="CP000976">
    <property type="protein sequence ID" value="ACH93383.1"/>
    <property type="molecule type" value="Genomic_DNA"/>
</dbReference>
<dbReference type="RefSeq" id="WP_012538194.1">
    <property type="nucleotide sequence ID" value="NC_011229.1"/>
</dbReference>
<dbReference type="SMR" id="B5RLZ7"/>
<dbReference type="STRING" id="412419.BDU_438"/>
<dbReference type="KEGG" id="bdu:BDU_438"/>
<dbReference type="eggNOG" id="COG0230">
    <property type="taxonomic scope" value="Bacteria"/>
</dbReference>
<dbReference type="HOGENOM" id="CLU_129938_2_0_12"/>
<dbReference type="OrthoDB" id="9804164at2"/>
<dbReference type="Proteomes" id="UP000000611">
    <property type="component" value="Chromosome"/>
</dbReference>
<dbReference type="GO" id="GO:1990904">
    <property type="term" value="C:ribonucleoprotein complex"/>
    <property type="evidence" value="ECO:0007669"/>
    <property type="project" value="UniProtKB-KW"/>
</dbReference>
<dbReference type="GO" id="GO:0005840">
    <property type="term" value="C:ribosome"/>
    <property type="evidence" value="ECO:0007669"/>
    <property type="project" value="UniProtKB-KW"/>
</dbReference>
<dbReference type="GO" id="GO:0003735">
    <property type="term" value="F:structural constituent of ribosome"/>
    <property type="evidence" value="ECO:0007669"/>
    <property type="project" value="InterPro"/>
</dbReference>
<dbReference type="GO" id="GO:0006412">
    <property type="term" value="P:translation"/>
    <property type="evidence" value="ECO:0007669"/>
    <property type="project" value="UniProtKB-UniRule"/>
</dbReference>
<dbReference type="FunFam" id="1.10.287.3980:FF:000001">
    <property type="entry name" value="Mitochondrial ribosomal protein L34"/>
    <property type="match status" value="1"/>
</dbReference>
<dbReference type="Gene3D" id="1.10.287.3980">
    <property type="match status" value="1"/>
</dbReference>
<dbReference type="HAMAP" id="MF_00391">
    <property type="entry name" value="Ribosomal_bL34"/>
    <property type="match status" value="1"/>
</dbReference>
<dbReference type="InterPro" id="IPR000271">
    <property type="entry name" value="Ribosomal_bL34"/>
</dbReference>
<dbReference type="InterPro" id="IPR020939">
    <property type="entry name" value="Ribosomal_bL34_CS"/>
</dbReference>
<dbReference type="NCBIfam" id="TIGR01030">
    <property type="entry name" value="rpmH_bact"/>
    <property type="match status" value="1"/>
</dbReference>
<dbReference type="PANTHER" id="PTHR14503:SF4">
    <property type="entry name" value="LARGE RIBOSOMAL SUBUNIT PROTEIN BL34M"/>
    <property type="match status" value="1"/>
</dbReference>
<dbReference type="PANTHER" id="PTHR14503">
    <property type="entry name" value="MITOCHONDRIAL RIBOSOMAL PROTEIN 34 FAMILY MEMBER"/>
    <property type="match status" value="1"/>
</dbReference>
<dbReference type="Pfam" id="PF00468">
    <property type="entry name" value="Ribosomal_L34"/>
    <property type="match status" value="1"/>
</dbReference>
<dbReference type="PROSITE" id="PS00784">
    <property type="entry name" value="RIBOSOMAL_L34"/>
    <property type="match status" value="1"/>
</dbReference>
<organism>
    <name type="scientific">Borrelia duttonii (strain Ly)</name>
    <dbReference type="NCBI Taxonomy" id="412419"/>
    <lineage>
        <taxon>Bacteria</taxon>
        <taxon>Pseudomonadati</taxon>
        <taxon>Spirochaetota</taxon>
        <taxon>Spirochaetia</taxon>
        <taxon>Spirochaetales</taxon>
        <taxon>Borreliaceae</taxon>
        <taxon>Borrelia</taxon>
    </lineage>
</organism>